<accession>Q9VRX3</accession>
<reference key="1">
    <citation type="journal article" date="2000" name="Science">
        <title>The genome sequence of Drosophila melanogaster.</title>
        <authorList>
            <person name="Adams M.D."/>
            <person name="Celniker S.E."/>
            <person name="Holt R.A."/>
            <person name="Evans C.A."/>
            <person name="Gocayne J.D."/>
            <person name="Amanatides P.G."/>
            <person name="Scherer S.E."/>
            <person name="Li P.W."/>
            <person name="Hoskins R.A."/>
            <person name="Galle R.F."/>
            <person name="George R.A."/>
            <person name="Lewis S.E."/>
            <person name="Richards S."/>
            <person name="Ashburner M."/>
            <person name="Henderson S.N."/>
            <person name="Sutton G.G."/>
            <person name="Wortman J.R."/>
            <person name="Yandell M.D."/>
            <person name="Zhang Q."/>
            <person name="Chen L.X."/>
            <person name="Brandon R.C."/>
            <person name="Rogers Y.-H.C."/>
            <person name="Blazej R.G."/>
            <person name="Champe M."/>
            <person name="Pfeiffer B.D."/>
            <person name="Wan K.H."/>
            <person name="Doyle C."/>
            <person name="Baxter E.G."/>
            <person name="Helt G."/>
            <person name="Nelson C.R."/>
            <person name="Miklos G.L.G."/>
            <person name="Abril J.F."/>
            <person name="Agbayani A."/>
            <person name="An H.-J."/>
            <person name="Andrews-Pfannkoch C."/>
            <person name="Baldwin D."/>
            <person name="Ballew R.M."/>
            <person name="Basu A."/>
            <person name="Baxendale J."/>
            <person name="Bayraktaroglu L."/>
            <person name="Beasley E.M."/>
            <person name="Beeson K.Y."/>
            <person name="Benos P.V."/>
            <person name="Berman B.P."/>
            <person name="Bhandari D."/>
            <person name="Bolshakov S."/>
            <person name="Borkova D."/>
            <person name="Botchan M.R."/>
            <person name="Bouck J."/>
            <person name="Brokstein P."/>
            <person name="Brottier P."/>
            <person name="Burtis K.C."/>
            <person name="Busam D.A."/>
            <person name="Butler H."/>
            <person name="Cadieu E."/>
            <person name="Center A."/>
            <person name="Chandra I."/>
            <person name="Cherry J.M."/>
            <person name="Cawley S."/>
            <person name="Dahlke C."/>
            <person name="Davenport L.B."/>
            <person name="Davies P."/>
            <person name="de Pablos B."/>
            <person name="Delcher A."/>
            <person name="Deng Z."/>
            <person name="Mays A.D."/>
            <person name="Dew I."/>
            <person name="Dietz S.M."/>
            <person name="Dodson K."/>
            <person name="Doup L.E."/>
            <person name="Downes M."/>
            <person name="Dugan-Rocha S."/>
            <person name="Dunkov B.C."/>
            <person name="Dunn P."/>
            <person name="Durbin K.J."/>
            <person name="Evangelista C.C."/>
            <person name="Ferraz C."/>
            <person name="Ferriera S."/>
            <person name="Fleischmann W."/>
            <person name="Fosler C."/>
            <person name="Gabrielian A.E."/>
            <person name="Garg N.S."/>
            <person name="Gelbart W.M."/>
            <person name="Glasser K."/>
            <person name="Glodek A."/>
            <person name="Gong F."/>
            <person name="Gorrell J.H."/>
            <person name="Gu Z."/>
            <person name="Guan P."/>
            <person name="Harris M."/>
            <person name="Harris N.L."/>
            <person name="Harvey D.A."/>
            <person name="Heiman T.J."/>
            <person name="Hernandez J.R."/>
            <person name="Houck J."/>
            <person name="Hostin D."/>
            <person name="Houston K.A."/>
            <person name="Howland T.J."/>
            <person name="Wei M.-H."/>
            <person name="Ibegwam C."/>
            <person name="Jalali M."/>
            <person name="Kalush F."/>
            <person name="Karpen G.H."/>
            <person name="Ke Z."/>
            <person name="Kennison J.A."/>
            <person name="Ketchum K.A."/>
            <person name="Kimmel B.E."/>
            <person name="Kodira C.D."/>
            <person name="Kraft C.L."/>
            <person name="Kravitz S."/>
            <person name="Kulp D."/>
            <person name="Lai Z."/>
            <person name="Lasko P."/>
            <person name="Lei Y."/>
            <person name="Levitsky A.A."/>
            <person name="Li J.H."/>
            <person name="Li Z."/>
            <person name="Liang Y."/>
            <person name="Lin X."/>
            <person name="Liu X."/>
            <person name="Mattei B."/>
            <person name="McIntosh T.C."/>
            <person name="McLeod M.P."/>
            <person name="McPherson D."/>
            <person name="Merkulov G."/>
            <person name="Milshina N.V."/>
            <person name="Mobarry C."/>
            <person name="Morris J."/>
            <person name="Moshrefi A."/>
            <person name="Mount S.M."/>
            <person name="Moy M."/>
            <person name="Murphy B."/>
            <person name="Murphy L."/>
            <person name="Muzny D.M."/>
            <person name="Nelson D.L."/>
            <person name="Nelson D.R."/>
            <person name="Nelson K.A."/>
            <person name="Nixon K."/>
            <person name="Nusskern D.R."/>
            <person name="Pacleb J.M."/>
            <person name="Palazzolo M."/>
            <person name="Pittman G.S."/>
            <person name="Pan S."/>
            <person name="Pollard J."/>
            <person name="Puri V."/>
            <person name="Reese M.G."/>
            <person name="Reinert K."/>
            <person name="Remington K."/>
            <person name="Saunders R.D.C."/>
            <person name="Scheeler F."/>
            <person name="Shen H."/>
            <person name="Shue B.C."/>
            <person name="Siden-Kiamos I."/>
            <person name="Simpson M."/>
            <person name="Skupski M.P."/>
            <person name="Smith T.J."/>
            <person name="Spier E."/>
            <person name="Spradling A.C."/>
            <person name="Stapleton M."/>
            <person name="Strong R."/>
            <person name="Sun E."/>
            <person name="Svirskas R."/>
            <person name="Tector C."/>
            <person name="Turner R."/>
            <person name="Venter E."/>
            <person name="Wang A.H."/>
            <person name="Wang X."/>
            <person name="Wang Z.-Y."/>
            <person name="Wassarman D.A."/>
            <person name="Weinstock G.M."/>
            <person name="Weissenbach J."/>
            <person name="Williams S.M."/>
            <person name="Woodage T."/>
            <person name="Worley K.C."/>
            <person name="Wu D."/>
            <person name="Yang S."/>
            <person name="Yao Q.A."/>
            <person name="Ye J."/>
            <person name="Yeh R.-F."/>
            <person name="Zaveri J.S."/>
            <person name="Zhan M."/>
            <person name="Zhang G."/>
            <person name="Zhao Q."/>
            <person name="Zheng L."/>
            <person name="Zheng X.H."/>
            <person name="Zhong F.N."/>
            <person name="Zhong W."/>
            <person name="Zhou X."/>
            <person name="Zhu S.C."/>
            <person name="Zhu X."/>
            <person name="Smith H.O."/>
            <person name="Gibbs R.A."/>
            <person name="Myers E.W."/>
            <person name="Rubin G.M."/>
            <person name="Venter J.C."/>
        </authorList>
    </citation>
    <scope>NUCLEOTIDE SEQUENCE [LARGE SCALE GENOMIC DNA]</scope>
    <source>
        <strain>Berkeley</strain>
    </source>
</reference>
<reference key="2">
    <citation type="journal article" date="2002" name="Genome Biol.">
        <title>Annotation of the Drosophila melanogaster euchromatic genome: a systematic review.</title>
        <authorList>
            <person name="Misra S."/>
            <person name="Crosby M.A."/>
            <person name="Mungall C.J."/>
            <person name="Matthews B.B."/>
            <person name="Campbell K.S."/>
            <person name="Hradecky P."/>
            <person name="Huang Y."/>
            <person name="Kaminker J.S."/>
            <person name="Millburn G.H."/>
            <person name="Prochnik S.E."/>
            <person name="Smith C.D."/>
            <person name="Tupy J.L."/>
            <person name="Whitfield E.J."/>
            <person name="Bayraktaroglu L."/>
            <person name="Berman B.P."/>
            <person name="Bettencourt B.R."/>
            <person name="Celniker S.E."/>
            <person name="de Grey A.D.N.J."/>
            <person name="Drysdale R.A."/>
            <person name="Harris N.L."/>
            <person name="Richter J."/>
            <person name="Russo S."/>
            <person name="Schroeder A.J."/>
            <person name="Shu S.Q."/>
            <person name="Stapleton M."/>
            <person name="Yamada C."/>
            <person name="Ashburner M."/>
            <person name="Gelbart W.M."/>
            <person name="Rubin G.M."/>
            <person name="Lewis S.E."/>
        </authorList>
    </citation>
    <scope>GENOME REANNOTATION</scope>
    <source>
        <strain>Berkeley</strain>
    </source>
</reference>
<reference key="3">
    <citation type="journal article" date="2002" name="Genome Biol.">
        <title>A Drosophila full-length cDNA resource.</title>
        <authorList>
            <person name="Stapleton M."/>
            <person name="Carlson J.W."/>
            <person name="Brokstein P."/>
            <person name="Yu C."/>
            <person name="Champe M."/>
            <person name="George R.A."/>
            <person name="Guarin H."/>
            <person name="Kronmiller B."/>
            <person name="Pacleb J.M."/>
            <person name="Park S."/>
            <person name="Wan K.H."/>
            <person name="Rubin G.M."/>
            <person name="Celniker S.E."/>
        </authorList>
    </citation>
    <scope>NUCLEOTIDE SEQUENCE [LARGE SCALE MRNA]</scope>
    <source>
        <strain>Berkeley</strain>
        <tissue>Testis</tissue>
    </source>
</reference>
<sequence>MREIVTLQIGGAGNAIGDSFWHVISHEHGVDYASGRFGGTSPLQLERINVFFNATASKRFYARTILIDTEASTIQRLNASSQLYRPENFVAGSESAGNNFARGYHTDGAAILDQVLENTRREVESVDSLQGFQLLHSIGGGTGSGLTSLIMEALVEQYPDNLLCNYVTIPSPNMSQVVVEPYNALLSTPALVNNSHLTFCLDNEALFQICNRNLKLKMSGYEHINHIVALTMSGITTCLRFPGQLNAGLRKIYVNMVPFPRLHFLIPGFAPLVTCKQQQFSKGTVSELVQQIFYSNNLLCAIDLRKGKLLTAAGIFRGRMSPREVDQLMTGVRNKNINNFVDWIPNNIKTAICDIPPRGLKMSATFIGNTTAIQTLFQRLLDASMSMLRRKAHLHWYTGEGMEEQEFQDAQQELQAIIDDYRSSAEGEDSGGGGGGGGGRSGSAESGEEEATPEAHCQYCTE</sequence>
<proteinExistence type="evidence at transcript level"/>
<keyword id="KW-0963">Cytoplasm</keyword>
<keyword id="KW-0206">Cytoskeleton</keyword>
<keyword id="KW-0342">GTP-binding</keyword>
<keyword id="KW-0460">Magnesium</keyword>
<keyword id="KW-0479">Metal-binding</keyword>
<keyword id="KW-0493">Microtubule</keyword>
<keyword id="KW-0547">Nucleotide-binding</keyword>
<keyword id="KW-1185">Reference proteome</keyword>
<protein>
    <recommendedName>
        <fullName evidence="6">beta-Tubulin at 65B</fullName>
    </recommendedName>
</protein>
<comment type="function">
    <text>Tubulin is the major constituent of microtubules, a cylinder consisting of laterally associated linear protofilaments composed of alpha- and beta-tubulin heterodimers. Microtubules grow by the addition of GTP-tubulin dimers to the microtubule end, where a stabilizing cap forms. Below the cap, tubulin dimers are in GDP-bound state, owing to GTPase activity of alpha-tubulin.</text>
</comment>
<comment type="cofactor">
    <cofactor evidence="2">
        <name>Mg(2+)</name>
        <dbReference type="ChEBI" id="CHEBI:18420"/>
    </cofactor>
</comment>
<comment type="subunit">
    <text>Dimer of alpha and beta chains. A typical microtubule is a hollow water-filled tube with an outer diameter of 25 nm and an inner diameter of 15 nM. Alpha-beta heterodimers associate head-to-tail to form protofilaments running lengthwise along the microtubule wall with the beta-tubulin subunit facing the microtubule plus end conferring a structural polarity. Microtubules usually have 13 protofilaments but different protofilament numbers can be found in some organisms and specialized cells.</text>
</comment>
<comment type="subcellular location">
    <subcellularLocation>
        <location evidence="1">Cytoplasm</location>
        <location evidence="1">Cytoskeleton</location>
    </subcellularLocation>
</comment>
<comment type="similarity">
    <text evidence="5">Belongs to the tubulin family.</text>
</comment>
<dbReference type="EMBL" id="AE014296">
    <property type="protein sequence ID" value="AAF50659.1"/>
    <property type="molecule type" value="Genomic_DNA"/>
</dbReference>
<dbReference type="EMBL" id="AY089468">
    <property type="protein sequence ID" value="AAL90206.1"/>
    <property type="molecule type" value="mRNA"/>
</dbReference>
<dbReference type="RefSeq" id="NP_729172.1">
    <property type="nucleotide sequence ID" value="NM_168168.1"/>
</dbReference>
<dbReference type="SMR" id="Q9VRX3"/>
<dbReference type="FunCoup" id="Q9VRX3">
    <property type="interactions" value="79"/>
</dbReference>
<dbReference type="STRING" id="7227.FBpp0076678"/>
<dbReference type="PaxDb" id="7227-FBpp0076678"/>
<dbReference type="DNASU" id="117406"/>
<dbReference type="EnsemblMetazoa" id="FBtr0076969">
    <property type="protein sequence ID" value="FBpp0076678"/>
    <property type="gene ID" value="FBgn0052396"/>
</dbReference>
<dbReference type="GeneID" id="117406"/>
<dbReference type="KEGG" id="dme:Dmel_CG32396"/>
<dbReference type="UCSC" id="CG32396-RA">
    <property type="organism name" value="d. melanogaster"/>
</dbReference>
<dbReference type="AGR" id="FB:FBgn0052396"/>
<dbReference type="CTD" id="117406"/>
<dbReference type="FlyBase" id="FBgn0052396">
    <property type="gene designation" value="betaTub65B"/>
</dbReference>
<dbReference type="VEuPathDB" id="VectorBase:FBgn0052396"/>
<dbReference type="eggNOG" id="KOG1375">
    <property type="taxonomic scope" value="Eukaryota"/>
</dbReference>
<dbReference type="HOGENOM" id="CLU_015718_1_2_1"/>
<dbReference type="InParanoid" id="Q9VRX3"/>
<dbReference type="OMA" id="FQICNRN"/>
<dbReference type="OrthoDB" id="7927693at2759"/>
<dbReference type="PhylomeDB" id="Q9VRX3"/>
<dbReference type="Reactome" id="R-DME-3371497">
    <property type="pathway name" value="HSP90 chaperone cycle for steroid hormone receptors (SHR) in the presence of ligand"/>
</dbReference>
<dbReference type="Reactome" id="R-DME-6807878">
    <property type="pathway name" value="COPI-mediated anterograde transport"/>
</dbReference>
<dbReference type="Reactome" id="R-DME-6811434">
    <property type="pathway name" value="COPI-dependent Golgi-to-ER retrograde traffic"/>
</dbReference>
<dbReference type="Reactome" id="R-DME-6811436">
    <property type="pathway name" value="COPI-independent Golgi-to-ER retrograde traffic"/>
</dbReference>
<dbReference type="Reactome" id="R-DME-983189">
    <property type="pathway name" value="Kinesins"/>
</dbReference>
<dbReference type="BioGRID-ORCS" id="117406">
    <property type="hits" value="0 hits in 1 CRISPR screen"/>
</dbReference>
<dbReference type="GenomeRNAi" id="117406"/>
<dbReference type="PRO" id="PR:Q9VRX3"/>
<dbReference type="Proteomes" id="UP000000803">
    <property type="component" value="Chromosome 3L"/>
</dbReference>
<dbReference type="Bgee" id="FBgn0052396">
    <property type="expression patterns" value="Expressed in mid-late elongation-stage spermatid (Drosophila) in testis and 29 other cell types or tissues"/>
</dbReference>
<dbReference type="ExpressionAtlas" id="Q9VRX3">
    <property type="expression patterns" value="baseline and differential"/>
</dbReference>
<dbReference type="GO" id="GO:0005737">
    <property type="term" value="C:cytoplasm"/>
    <property type="evidence" value="ECO:0000318"/>
    <property type="project" value="GO_Central"/>
</dbReference>
<dbReference type="GO" id="GO:0005874">
    <property type="term" value="C:microtubule"/>
    <property type="evidence" value="ECO:0000314"/>
    <property type="project" value="FlyBase"/>
</dbReference>
<dbReference type="GO" id="GO:0005525">
    <property type="term" value="F:GTP binding"/>
    <property type="evidence" value="ECO:0000318"/>
    <property type="project" value="GO_Central"/>
</dbReference>
<dbReference type="GO" id="GO:0003924">
    <property type="term" value="F:GTPase activity"/>
    <property type="evidence" value="ECO:0007669"/>
    <property type="project" value="InterPro"/>
</dbReference>
<dbReference type="GO" id="GO:0046872">
    <property type="term" value="F:metal ion binding"/>
    <property type="evidence" value="ECO:0007669"/>
    <property type="project" value="UniProtKB-KW"/>
</dbReference>
<dbReference type="GO" id="GO:0005200">
    <property type="term" value="F:structural constituent of cytoskeleton"/>
    <property type="evidence" value="ECO:0000314"/>
    <property type="project" value="FlyBase"/>
</dbReference>
<dbReference type="GO" id="GO:0000226">
    <property type="term" value="P:microtubule cytoskeleton organization"/>
    <property type="evidence" value="ECO:0000315"/>
    <property type="project" value="FlyBase"/>
</dbReference>
<dbReference type="GO" id="GO:0000278">
    <property type="term" value="P:mitotic cell cycle"/>
    <property type="evidence" value="ECO:0000318"/>
    <property type="project" value="GO_Central"/>
</dbReference>
<dbReference type="CDD" id="cd02187">
    <property type="entry name" value="beta_tubulin"/>
    <property type="match status" value="1"/>
</dbReference>
<dbReference type="FunFam" id="3.30.1330.20:FF:000009">
    <property type="entry name" value="Tubulin beta chain"/>
    <property type="match status" value="1"/>
</dbReference>
<dbReference type="FunFam" id="3.40.50.1440:FF:000037">
    <property type="entry name" value="Tubulin beta chain"/>
    <property type="match status" value="1"/>
</dbReference>
<dbReference type="Gene3D" id="1.10.287.600">
    <property type="entry name" value="Helix hairpin bin"/>
    <property type="match status" value="1"/>
</dbReference>
<dbReference type="Gene3D" id="3.30.1330.20">
    <property type="entry name" value="Tubulin/FtsZ, C-terminal domain"/>
    <property type="match status" value="1"/>
</dbReference>
<dbReference type="Gene3D" id="3.40.50.1440">
    <property type="entry name" value="Tubulin/FtsZ, GTPase domain"/>
    <property type="match status" value="1"/>
</dbReference>
<dbReference type="InterPro" id="IPR013838">
    <property type="entry name" value="Beta-tubulin_BS"/>
</dbReference>
<dbReference type="InterPro" id="IPR002453">
    <property type="entry name" value="Beta_tubulin"/>
</dbReference>
<dbReference type="InterPro" id="IPR008280">
    <property type="entry name" value="Tub_FtsZ_C"/>
</dbReference>
<dbReference type="InterPro" id="IPR000217">
    <property type="entry name" value="Tubulin"/>
</dbReference>
<dbReference type="InterPro" id="IPR037103">
    <property type="entry name" value="Tubulin/FtsZ-like_C"/>
</dbReference>
<dbReference type="InterPro" id="IPR018316">
    <property type="entry name" value="Tubulin/FtsZ_2-layer-sand-dom"/>
</dbReference>
<dbReference type="InterPro" id="IPR036525">
    <property type="entry name" value="Tubulin/FtsZ_GTPase_sf"/>
</dbReference>
<dbReference type="InterPro" id="IPR023123">
    <property type="entry name" value="Tubulin_C"/>
</dbReference>
<dbReference type="InterPro" id="IPR017975">
    <property type="entry name" value="Tubulin_CS"/>
</dbReference>
<dbReference type="InterPro" id="IPR003008">
    <property type="entry name" value="Tubulin_FtsZ_GTPase"/>
</dbReference>
<dbReference type="PANTHER" id="PTHR11588">
    <property type="entry name" value="TUBULIN"/>
    <property type="match status" value="1"/>
</dbReference>
<dbReference type="Pfam" id="PF00091">
    <property type="entry name" value="Tubulin"/>
    <property type="match status" value="1"/>
</dbReference>
<dbReference type="Pfam" id="PF03953">
    <property type="entry name" value="Tubulin_C"/>
    <property type="match status" value="1"/>
</dbReference>
<dbReference type="PRINTS" id="PR01163">
    <property type="entry name" value="BETATUBULIN"/>
</dbReference>
<dbReference type="PRINTS" id="PR01161">
    <property type="entry name" value="TUBULIN"/>
</dbReference>
<dbReference type="SMART" id="SM00864">
    <property type="entry name" value="Tubulin"/>
    <property type="match status" value="1"/>
</dbReference>
<dbReference type="SMART" id="SM00865">
    <property type="entry name" value="Tubulin_C"/>
    <property type="match status" value="1"/>
</dbReference>
<dbReference type="SUPFAM" id="SSF55307">
    <property type="entry name" value="Tubulin C-terminal domain-like"/>
    <property type="match status" value="1"/>
</dbReference>
<dbReference type="SUPFAM" id="SSF52490">
    <property type="entry name" value="Tubulin nucleotide-binding domain-like"/>
    <property type="match status" value="1"/>
</dbReference>
<dbReference type="PROSITE" id="PS00227">
    <property type="entry name" value="TUBULIN"/>
    <property type="match status" value="1"/>
</dbReference>
<dbReference type="PROSITE" id="PS00228">
    <property type="entry name" value="TUBULIN_B_AUTOREG"/>
    <property type="match status" value="1"/>
</dbReference>
<name>TBBP_DROME</name>
<gene>
    <name evidence="6" type="primary">betaTub65B</name>
    <name evidence="6" type="ORF">CG32396</name>
</gene>
<organism>
    <name type="scientific">Drosophila melanogaster</name>
    <name type="common">Fruit fly</name>
    <dbReference type="NCBI Taxonomy" id="7227"/>
    <lineage>
        <taxon>Eukaryota</taxon>
        <taxon>Metazoa</taxon>
        <taxon>Ecdysozoa</taxon>
        <taxon>Arthropoda</taxon>
        <taxon>Hexapoda</taxon>
        <taxon>Insecta</taxon>
        <taxon>Pterygota</taxon>
        <taxon>Neoptera</taxon>
        <taxon>Endopterygota</taxon>
        <taxon>Diptera</taxon>
        <taxon>Brachycera</taxon>
        <taxon>Muscomorpha</taxon>
        <taxon>Ephydroidea</taxon>
        <taxon>Drosophilidae</taxon>
        <taxon>Drosophila</taxon>
        <taxon>Sophophora</taxon>
    </lineage>
</organism>
<feature type="chain" id="PRO_0000048281" description="beta-Tubulin at 65B">
    <location>
        <begin position="1"/>
        <end position="462"/>
    </location>
</feature>
<feature type="region of interest" description="Disordered" evidence="4">
    <location>
        <begin position="420"/>
        <end position="462"/>
    </location>
</feature>
<feature type="compositionally biased region" description="Gly residues" evidence="4">
    <location>
        <begin position="430"/>
        <end position="441"/>
    </location>
</feature>
<feature type="binding site" evidence="2">
    <location>
        <position position="70"/>
    </location>
    <ligand>
        <name>GTP</name>
        <dbReference type="ChEBI" id="CHEBI:37565"/>
    </ligand>
</feature>
<feature type="binding site" evidence="2">
    <location>
        <position position="70"/>
    </location>
    <ligand>
        <name>Mg(2+)</name>
        <dbReference type="ChEBI" id="CHEBI:18420"/>
    </ligand>
</feature>
<feature type="binding site" evidence="3">
    <location>
        <position position="137"/>
    </location>
    <ligand>
        <name>GTP</name>
        <dbReference type="ChEBI" id="CHEBI:37565"/>
    </ligand>
</feature>
<feature type="binding site" evidence="3">
    <location>
        <position position="141"/>
    </location>
    <ligand>
        <name>GTP</name>
        <dbReference type="ChEBI" id="CHEBI:37565"/>
    </ligand>
</feature>
<feature type="binding site" evidence="3">
    <location>
        <position position="142"/>
    </location>
    <ligand>
        <name>GTP</name>
        <dbReference type="ChEBI" id="CHEBI:37565"/>
    </ligand>
</feature>
<feature type="binding site" evidence="3">
    <location>
        <position position="143"/>
    </location>
    <ligand>
        <name>GTP</name>
        <dbReference type="ChEBI" id="CHEBI:37565"/>
    </ligand>
</feature>
<feature type="binding site" evidence="3">
    <location>
        <position position="203"/>
    </location>
    <ligand>
        <name>GTP</name>
        <dbReference type="ChEBI" id="CHEBI:37565"/>
    </ligand>
</feature>
<feature type="binding site" evidence="3">
    <location>
        <position position="225"/>
    </location>
    <ligand>
        <name>GTP</name>
        <dbReference type="ChEBI" id="CHEBI:37565"/>
    </ligand>
</feature>
<evidence type="ECO:0000250" key="1"/>
<evidence type="ECO:0000250" key="2">
    <source>
        <dbReference type="UniProtKB" id="P68363"/>
    </source>
</evidence>
<evidence type="ECO:0000250" key="3">
    <source>
        <dbReference type="UniProtKB" id="Q13509"/>
    </source>
</evidence>
<evidence type="ECO:0000256" key="4">
    <source>
        <dbReference type="SAM" id="MobiDB-lite"/>
    </source>
</evidence>
<evidence type="ECO:0000305" key="5"/>
<evidence type="ECO:0000312" key="6">
    <source>
        <dbReference type="FlyBase" id="FBgn0052396"/>
    </source>
</evidence>